<sequence length="139" mass="15638">MAQLTVQIVTPDGLVYDHHASYVSVRTLDGEMGILPRHENMIAVLAVDEVKVKRIDDKDHVNWIAVNGGVIEIANDMITIVADSAERARDIDISRAERAKLRAERAIEEAQDKHLIDQERRAKIALQRAINRINVGNRL</sequence>
<comment type="function">
    <text evidence="1">Produces ATP from ADP in the presence of a proton gradient across the membrane.</text>
</comment>
<comment type="subunit">
    <text evidence="1">F-type ATPases have 2 components, CF(1) - the catalytic core - and CF(0) - the membrane proton channel. CF(1) has five subunits: alpha(3), beta(3), gamma(1), delta(1), epsilon(1). CF(0) has three main subunits: a, b and c.</text>
</comment>
<comment type="subcellular location">
    <subcellularLocation>
        <location evidence="1">Cell membrane</location>
        <topology evidence="1">Peripheral membrane protein</topology>
    </subcellularLocation>
</comment>
<comment type="similarity">
    <text evidence="1">Belongs to the ATPase epsilon chain family.</text>
</comment>
<organism>
    <name type="scientific">Streptococcus pneumoniae serotype 19F (strain G54)</name>
    <dbReference type="NCBI Taxonomy" id="512566"/>
    <lineage>
        <taxon>Bacteria</taxon>
        <taxon>Bacillati</taxon>
        <taxon>Bacillota</taxon>
        <taxon>Bacilli</taxon>
        <taxon>Lactobacillales</taxon>
        <taxon>Streptococcaceae</taxon>
        <taxon>Streptococcus</taxon>
    </lineage>
</organism>
<name>ATPE_STRP4</name>
<keyword id="KW-0066">ATP synthesis</keyword>
<keyword id="KW-1003">Cell membrane</keyword>
<keyword id="KW-0139">CF(1)</keyword>
<keyword id="KW-0375">Hydrogen ion transport</keyword>
<keyword id="KW-0406">Ion transport</keyword>
<keyword id="KW-0472">Membrane</keyword>
<keyword id="KW-0813">Transport</keyword>
<dbReference type="EMBL" id="CP001015">
    <property type="protein sequence ID" value="ACF55059.1"/>
    <property type="molecule type" value="Genomic_DNA"/>
</dbReference>
<dbReference type="SMR" id="B5E669"/>
<dbReference type="KEGG" id="spx:SPG_1429"/>
<dbReference type="HOGENOM" id="CLU_084338_1_0_9"/>
<dbReference type="GO" id="GO:0005886">
    <property type="term" value="C:plasma membrane"/>
    <property type="evidence" value="ECO:0007669"/>
    <property type="project" value="UniProtKB-SubCell"/>
</dbReference>
<dbReference type="GO" id="GO:0045259">
    <property type="term" value="C:proton-transporting ATP synthase complex"/>
    <property type="evidence" value="ECO:0007669"/>
    <property type="project" value="UniProtKB-KW"/>
</dbReference>
<dbReference type="GO" id="GO:0005524">
    <property type="term" value="F:ATP binding"/>
    <property type="evidence" value="ECO:0007669"/>
    <property type="project" value="UniProtKB-UniRule"/>
</dbReference>
<dbReference type="GO" id="GO:0046933">
    <property type="term" value="F:proton-transporting ATP synthase activity, rotational mechanism"/>
    <property type="evidence" value="ECO:0007669"/>
    <property type="project" value="UniProtKB-UniRule"/>
</dbReference>
<dbReference type="CDD" id="cd12152">
    <property type="entry name" value="F1-ATPase_delta"/>
    <property type="match status" value="1"/>
</dbReference>
<dbReference type="FunFam" id="1.20.5.440:FF:000001">
    <property type="entry name" value="ATP synthase epsilon chain"/>
    <property type="match status" value="1"/>
</dbReference>
<dbReference type="Gene3D" id="1.20.5.440">
    <property type="entry name" value="ATP synthase delta/epsilon subunit, C-terminal domain"/>
    <property type="match status" value="1"/>
</dbReference>
<dbReference type="Gene3D" id="2.60.15.10">
    <property type="entry name" value="F0F1 ATP synthase delta/epsilon subunit, N-terminal"/>
    <property type="match status" value="1"/>
</dbReference>
<dbReference type="HAMAP" id="MF_00530">
    <property type="entry name" value="ATP_synth_epsil_bac"/>
    <property type="match status" value="1"/>
</dbReference>
<dbReference type="InterPro" id="IPR001469">
    <property type="entry name" value="ATP_synth_F1_dsu/esu"/>
</dbReference>
<dbReference type="InterPro" id="IPR020546">
    <property type="entry name" value="ATP_synth_F1_dsu/esu_N"/>
</dbReference>
<dbReference type="InterPro" id="IPR020547">
    <property type="entry name" value="ATP_synth_F1_esu_C"/>
</dbReference>
<dbReference type="InterPro" id="IPR036771">
    <property type="entry name" value="ATPsynth_dsu/esu_N"/>
</dbReference>
<dbReference type="NCBIfam" id="TIGR01216">
    <property type="entry name" value="ATP_synt_epsi"/>
    <property type="match status" value="1"/>
</dbReference>
<dbReference type="NCBIfam" id="NF001846">
    <property type="entry name" value="PRK00571.1-3"/>
    <property type="match status" value="1"/>
</dbReference>
<dbReference type="PANTHER" id="PTHR13822">
    <property type="entry name" value="ATP SYNTHASE DELTA/EPSILON CHAIN"/>
    <property type="match status" value="1"/>
</dbReference>
<dbReference type="PANTHER" id="PTHR13822:SF10">
    <property type="entry name" value="ATP SYNTHASE EPSILON CHAIN, CHLOROPLASTIC"/>
    <property type="match status" value="1"/>
</dbReference>
<dbReference type="Pfam" id="PF00401">
    <property type="entry name" value="ATP-synt_DE"/>
    <property type="match status" value="1"/>
</dbReference>
<dbReference type="Pfam" id="PF02823">
    <property type="entry name" value="ATP-synt_DE_N"/>
    <property type="match status" value="1"/>
</dbReference>
<dbReference type="SUPFAM" id="SSF51344">
    <property type="entry name" value="Epsilon subunit of F1F0-ATP synthase N-terminal domain"/>
    <property type="match status" value="1"/>
</dbReference>
<evidence type="ECO:0000255" key="1">
    <source>
        <dbReference type="HAMAP-Rule" id="MF_00530"/>
    </source>
</evidence>
<accession>B5E669</accession>
<gene>
    <name evidence="1" type="primary">atpC</name>
    <name type="ordered locus">SPG_1429</name>
</gene>
<proteinExistence type="inferred from homology"/>
<reference key="1">
    <citation type="journal article" date="2001" name="Microb. Drug Resist.">
        <title>Annotated draft genomic sequence from a Streptococcus pneumoniae type 19F clinical isolate.</title>
        <authorList>
            <person name="Dopazo J."/>
            <person name="Mendoza A."/>
            <person name="Herrero J."/>
            <person name="Caldara F."/>
            <person name="Humbert Y."/>
            <person name="Friedli L."/>
            <person name="Guerrier M."/>
            <person name="Grand-Schenk E."/>
            <person name="Gandin C."/>
            <person name="de Francesco M."/>
            <person name="Polissi A."/>
            <person name="Buell G."/>
            <person name="Feger G."/>
            <person name="Garcia E."/>
            <person name="Peitsch M."/>
            <person name="Garcia-Bustos J.F."/>
        </authorList>
    </citation>
    <scope>NUCLEOTIDE SEQUENCE [LARGE SCALE GENOMIC DNA]</scope>
    <source>
        <strain>G54</strain>
    </source>
</reference>
<reference key="2">
    <citation type="submission" date="2008-03" db="EMBL/GenBank/DDBJ databases">
        <title>Pneumococcal beta glucoside metabolism investigated by whole genome comparison.</title>
        <authorList>
            <person name="Mulas L."/>
            <person name="Trappetti C."/>
            <person name="Hakenbeck R."/>
            <person name="Iannelli F."/>
            <person name="Pozzi G."/>
            <person name="Davidsen T.M."/>
            <person name="Tettelin H."/>
            <person name="Oggioni M."/>
        </authorList>
    </citation>
    <scope>NUCLEOTIDE SEQUENCE [LARGE SCALE GENOMIC DNA]</scope>
    <source>
        <strain>G54</strain>
    </source>
</reference>
<protein>
    <recommendedName>
        <fullName evidence="1">ATP synthase epsilon chain</fullName>
    </recommendedName>
    <alternativeName>
        <fullName evidence="1">ATP synthase F1 sector epsilon subunit</fullName>
    </alternativeName>
    <alternativeName>
        <fullName evidence="1">F-ATPase epsilon subunit</fullName>
    </alternativeName>
</protein>
<feature type="chain" id="PRO_1000127897" description="ATP synthase epsilon chain">
    <location>
        <begin position="1"/>
        <end position="139"/>
    </location>
</feature>